<organism>
    <name type="scientific">Streptococcus pneumoniae serotype 4 (strain ATCC BAA-334 / TIGR4)</name>
    <dbReference type="NCBI Taxonomy" id="170187"/>
    <lineage>
        <taxon>Bacteria</taxon>
        <taxon>Bacillati</taxon>
        <taxon>Bacillota</taxon>
        <taxon>Bacilli</taxon>
        <taxon>Lactobacillales</taxon>
        <taxon>Streptococcaceae</taxon>
        <taxon>Streptococcus</taxon>
    </lineage>
</organism>
<protein>
    <recommendedName>
        <fullName>Protein DpnD</fullName>
    </recommendedName>
</protein>
<evidence type="ECO:0000269" key="1">
    <source>
    </source>
</evidence>
<evidence type="ECO:0000269" key="2">
    <source>
    </source>
</evidence>
<evidence type="ECO:0000303" key="3">
    <source>
    </source>
</evidence>
<dbReference type="EMBL" id="M14340">
    <property type="protein sequence ID" value="AAA88578.1"/>
    <property type="molecule type" value="Genomic_DNA"/>
</dbReference>
<dbReference type="EMBL" id="AE005672">
    <property type="protein sequence ID" value="AAK75921.1"/>
    <property type="molecule type" value="Genomic_DNA"/>
</dbReference>
<dbReference type="PIR" id="D24372">
    <property type="entry name" value="D24372"/>
</dbReference>
<dbReference type="PIR" id="H95215">
    <property type="entry name" value="H95215"/>
</dbReference>
<dbReference type="RefSeq" id="WP_000850938.1">
    <property type="nucleotide sequence ID" value="NZ_CP155539.1"/>
</dbReference>
<dbReference type="SMR" id="P0A3T4"/>
<dbReference type="PaxDb" id="170187-SP_1849"/>
<dbReference type="EnsemblBacteria" id="AAK75921">
    <property type="protein sequence ID" value="AAK75921"/>
    <property type="gene ID" value="SP_1849"/>
</dbReference>
<dbReference type="KEGG" id="spn:SP_1849"/>
<dbReference type="eggNOG" id="ENOG503045Z">
    <property type="taxonomic scope" value="Bacteria"/>
</dbReference>
<dbReference type="BioCyc" id="SPNE170187:G1FZB-1879-MONOMER"/>
<dbReference type="Proteomes" id="UP000000585">
    <property type="component" value="Chromosome"/>
</dbReference>
<dbReference type="GO" id="GO:0009307">
    <property type="term" value="P:DNA restriction-modification system"/>
    <property type="evidence" value="ECO:0007669"/>
    <property type="project" value="UniProtKB-KW"/>
</dbReference>
<dbReference type="InterPro" id="IPR025575">
    <property type="entry name" value="DpnD/PcfM_C"/>
</dbReference>
<dbReference type="InterPro" id="IPR056487">
    <property type="entry name" value="DpnD_N"/>
</dbReference>
<dbReference type="Pfam" id="PF14207">
    <property type="entry name" value="DpnD-PcfM"/>
    <property type="match status" value="1"/>
</dbReference>
<dbReference type="Pfam" id="PF23117">
    <property type="entry name" value="DpnD_N"/>
    <property type="match status" value="1"/>
</dbReference>
<gene>
    <name evidence="3" type="primary">dpnD</name>
    <name type="ordered locus">SP_1849</name>
</gene>
<name>DPND_STRPN</name>
<proteinExistence type="predicted"/>
<sequence>MKTKQLVASEEVYDFLKVIWPDYETESRYDNLSLIVCTLSDPDCVRWLSENMKFGDEKQLALMKEKYGWEVGDKLPEWLHSSYHRLLLIGELLESNLKLKKYTVEITETLSRLVSIEAENPDEAERLVREKYKSCEIVLDADDFQDYDTSIYE</sequence>
<keyword id="KW-1185">Reference proteome</keyword>
<keyword id="KW-0680">Restriction system</keyword>
<reference key="1">
    <citation type="journal article" date="1986" name="Cell">
        <title>Genetic basis of the complementary DpnI and DpnII restriction systems of S. pneumoniae: an intercellular cassette mechanism.</title>
        <authorList>
            <person name="Lacks S.A."/>
            <person name="Mannarelli B.M."/>
            <person name="Springhorn S.S."/>
            <person name="Greenberg B."/>
        </authorList>
    </citation>
    <scope>NUCLEOTIDE SEQUENCE [GENOMIC DNA]</scope>
    <source>
        <strain>R6 / 193</strain>
    </source>
</reference>
<reference key="2">
    <citation type="journal article" date="1988" name="J. Biol. Chem.">
        <title>Proteins encoded by the DpnI restriction gene cassette. Hyperproduction and characterization of the DpnI endonuclease.</title>
        <authorList>
            <person name="de la Campa A.G."/>
            <person name="Springhorn S.S."/>
            <person name="Kale P."/>
            <person name="Lacks S.A."/>
        </authorList>
    </citation>
    <scope>NUCLEOTIDE SEQUENCE [GENOMIC DNA]</scope>
    <source>
        <strain>R6 / 193</strain>
    </source>
</reference>
<reference key="3">
    <citation type="journal article" date="2001" name="Science">
        <title>Complete genome sequence of a virulent isolate of Streptococcus pneumoniae.</title>
        <authorList>
            <person name="Tettelin H."/>
            <person name="Nelson K.E."/>
            <person name="Paulsen I.T."/>
            <person name="Eisen J.A."/>
            <person name="Read T.D."/>
            <person name="Peterson S.N."/>
            <person name="Heidelberg J.F."/>
            <person name="DeBoy R.T."/>
            <person name="Haft D.H."/>
            <person name="Dodson R.J."/>
            <person name="Durkin A.S."/>
            <person name="Gwinn M.L."/>
            <person name="Kolonay J.F."/>
            <person name="Nelson W.C."/>
            <person name="Peterson J.D."/>
            <person name="Umayam L.A."/>
            <person name="White O."/>
            <person name="Salzberg S.L."/>
            <person name="Lewis M.R."/>
            <person name="Radune D."/>
            <person name="Holtzapple E.K."/>
            <person name="Khouri H.M."/>
            <person name="Wolf A.M."/>
            <person name="Utterback T.R."/>
            <person name="Hansen C.L."/>
            <person name="McDonald L.A."/>
            <person name="Feldblyum T.V."/>
            <person name="Angiuoli S.V."/>
            <person name="Dickinson T."/>
            <person name="Hickey E.K."/>
            <person name="Holt I.E."/>
            <person name="Loftus B.J."/>
            <person name="Yang F."/>
            <person name="Smith H.O."/>
            <person name="Venter J.C."/>
            <person name="Dougherty B.A."/>
            <person name="Morrison D.A."/>
            <person name="Hollingshead S.K."/>
            <person name="Fraser C.M."/>
        </authorList>
    </citation>
    <scope>NUCLEOTIDE SEQUENCE [LARGE SCALE GENOMIC DNA]</scope>
    <source>
        <strain>ATCC BAA-334 / TIGR4</strain>
    </source>
</reference>
<comment type="miscellaneous">
    <text evidence="1 2">Encoded next to the DpnI restriction endonuclease.</text>
</comment>
<feature type="chain" id="PRO_0000079991" description="Protein DpnD">
    <location>
        <begin position="1"/>
        <end position="153"/>
    </location>
</feature>
<accession>P0A3T4</accession>
<accession>P09359</accession>